<keyword id="KW-0235">DNA replication</keyword>
<keyword id="KW-0244">Early protein</keyword>
<keyword id="KW-1035">Host cytoplasm</keyword>
<keyword id="KW-1048">Host nucleus</keyword>
<keyword id="KW-0479">Metal-binding</keyword>
<keyword id="KW-1185">Reference proteome</keyword>
<keyword id="KW-0804">Transcription</keyword>
<keyword id="KW-0805">Transcription regulation</keyword>
<keyword id="KW-1194">Viral DNA replication</keyword>
<keyword id="KW-0946">Virion</keyword>
<keyword id="KW-0862">Zinc</keyword>
<keyword id="KW-0863">Zinc-finger</keyword>
<accession>P41710</accession>
<organismHost>
    <name type="scientific">Lepidoptera</name>
    <name type="common">butterflies and moths</name>
    <dbReference type="NCBI Taxonomy" id="7088"/>
</organismHost>
<gene>
    <name type="primary">IE0</name>
    <name type="ORF">ORF141</name>
</gene>
<name>IE0_NPVAC</name>
<proteinExistence type="evidence at protein level"/>
<protein>
    <recommendedName>
        <fullName>Immediate-early protein IE-0</fullName>
        <shortName>Immediate early 0 protein</shortName>
    </recommendedName>
    <alternativeName>
        <fullName>Immediate early transactivator 0</fullName>
    </alternativeName>
</protein>
<comment type="function">
    <text evidence="2 4 5 6">Putative viral E3 ligase that plays an essential regulatory role in both viral DNA replication and transcriptional transactivation. The role in transcription has been shown to include activation of gene expression from early viral promoters. Also promotes the efficient egress of nucleocapsids from the host nucleus. May act as an E3 ligase that promotes ubiquitination of nucleocapsids proteins by vUbi and subsequent viral egress for the host nucleus.</text>
</comment>
<comment type="subunit">
    <text evidence="2 3 6">Interacts with proteins C42 and FP25. Interacts with host beta-tubulin. Interacts with Ac66 and vUb.</text>
</comment>
<comment type="subcellular location">
    <subcellularLocation>
        <location evidence="2 4 5">Host nucleus</location>
    </subcellularLocation>
    <subcellularLocation>
        <location evidence="2 5">Host cytoplasm</location>
    </subcellularLocation>
    <subcellularLocation>
        <location evidence="2">Virion</location>
    </subcellularLocation>
</comment>
<dbReference type="EMBL" id="L22858">
    <property type="protein sequence ID" value="AAA66771.1"/>
    <property type="molecule type" value="Genomic_DNA"/>
</dbReference>
<dbReference type="PIR" id="G72867">
    <property type="entry name" value="G72867"/>
</dbReference>
<dbReference type="KEGG" id="vg:1403974"/>
<dbReference type="OrthoDB" id="14620at10239"/>
<dbReference type="Proteomes" id="UP000008292">
    <property type="component" value="Segment"/>
</dbReference>
<dbReference type="GO" id="GO:0030430">
    <property type="term" value="C:host cell cytoplasm"/>
    <property type="evidence" value="ECO:0007669"/>
    <property type="project" value="UniProtKB-SubCell"/>
</dbReference>
<dbReference type="GO" id="GO:0042025">
    <property type="term" value="C:host cell nucleus"/>
    <property type="evidence" value="ECO:0007669"/>
    <property type="project" value="UniProtKB-SubCell"/>
</dbReference>
<dbReference type="GO" id="GO:0044423">
    <property type="term" value="C:virion component"/>
    <property type="evidence" value="ECO:0007669"/>
    <property type="project" value="UniProtKB-KW"/>
</dbReference>
<dbReference type="GO" id="GO:0008270">
    <property type="term" value="F:zinc ion binding"/>
    <property type="evidence" value="ECO:0007669"/>
    <property type="project" value="UniProtKB-KW"/>
</dbReference>
<dbReference type="GO" id="GO:0006260">
    <property type="term" value="P:DNA replication"/>
    <property type="evidence" value="ECO:0007669"/>
    <property type="project" value="UniProtKB-KW"/>
</dbReference>
<dbReference type="GO" id="GO:0039693">
    <property type="term" value="P:viral DNA genome replication"/>
    <property type="evidence" value="ECO:0007669"/>
    <property type="project" value="UniProtKB-KW"/>
</dbReference>
<dbReference type="InterPro" id="IPR007954">
    <property type="entry name" value="Baculo_IE-1"/>
</dbReference>
<dbReference type="InterPro" id="IPR001841">
    <property type="entry name" value="Znf_RING"/>
</dbReference>
<dbReference type="Pfam" id="PF05290">
    <property type="entry name" value="Baculo_IE-1"/>
    <property type="match status" value="1"/>
</dbReference>
<dbReference type="SUPFAM" id="SSF57850">
    <property type="entry name" value="RING/U-box"/>
    <property type="match status" value="1"/>
</dbReference>
<dbReference type="PROSITE" id="PS50089">
    <property type="entry name" value="ZF_RING_2"/>
    <property type="match status" value="1"/>
</dbReference>
<evidence type="ECO:0000255" key="1">
    <source>
        <dbReference type="PROSITE-ProRule" id="PRU00175"/>
    </source>
</evidence>
<evidence type="ECO:0000269" key="2">
    <source>
    </source>
</evidence>
<evidence type="ECO:0000269" key="3">
    <source>
    </source>
</evidence>
<evidence type="ECO:0000269" key="4">
    <source>
    </source>
</evidence>
<evidence type="ECO:0000269" key="5">
    <source>
    </source>
</evidence>
<evidence type="ECO:0000269" key="6">
    <source>
    </source>
</evidence>
<organism>
    <name type="scientific">Autographa californica nuclear polyhedrosis virus</name>
    <name type="common">AcMNPV</name>
    <dbReference type="NCBI Taxonomy" id="46015"/>
    <lineage>
        <taxon>Viruses</taxon>
        <taxon>Viruses incertae sedis</taxon>
        <taxon>Naldaviricetes</taxon>
        <taxon>Lefavirales</taxon>
        <taxon>Baculoviridae</taxon>
        <taxon>Alphabaculovirus</taxon>
        <taxon>Alphabaculovirus aucalifornicae</taxon>
    </lineage>
</organism>
<sequence length="261" mass="30109">MIRTSSHVLNVQENIMTSNCASSPYSCEATSACAEAQQVMIDNFVFFHMYNADIQIDAKLQCGVRSAAFAMIDDKHLEMYKHRIENKFFYYYDQCADIAKPDRLPDDDGACCHHFIFDAQRIIQCIKEIESAYGVRDRGNVIVFYPYLKQLRDALKLIKNSFACCFKIINSMQMYVNELISNCLLFIEKLETINKTVKVMNLFVDNLVLYECNVCKEISTDERFLKPKECCEYAICNACCVNMWKTATTHAKCPACRTSYK</sequence>
<feature type="chain" id="PRO_0000056360" description="Immediate-early protein IE-0">
    <location>
        <begin position="1"/>
        <end position="261"/>
    </location>
</feature>
<feature type="zinc finger region" description="RING-type" evidence="1">
    <location>
        <begin position="212"/>
        <end position="257"/>
    </location>
</feature>
<reference key="1">
    <citation type="journal article" date="1994" name="Virology">
        <title>The complete DNA sequence of Autographa californica nuclear polyhedrosis virus.</title>
        <authorList>
            <person name="Ayres M.D."/>
            <person name="Howard S.C."/>
            <person name="Kuzio J."/>
            <person name="Lopez-Ferber M."/>
            <person name="Possee R.D."/>
        </authorList>
    </citation>
    <scope>NUCLEOTIDE SEQUENCE [LARGE SCALE GENOMIC DNA]</scope>
    <source>
        <strain>C6</strain>
    </source>
</reference>
<reference key="2">
    <citation type="journal article" date="2007" name="J. Virol.">
        <title>Autographa californica multiple nucleopolyhedrovirus EXON0 (ORF141) is required for efficient egress of nucleocapsids from the nucleus.</title>
        <authorList>
            <person name="Fang M."/>
            <person name="Dai X."/>
            <person name="Theilmann D.A."/>
        </authorList>
    </citation>
    <scope>FUNCTION</scope>
    <scope>SUBCELLULAR LOCATION</scope>
    <scope>INTERACTION WITH FP25 AND C42</scope>
</reference>
<reference key="3">
    <citation type="journal article" date="2009" name="Virology">
        <title>AcMNPV EXON0 (AC141) which is required for the efficient egress of budded virus nucleocapsids interacts with beta-tubulin.</title>
        <authorList>
            <person name="Fang M."/>
            <person name="Nie Y."/>
            <person name="Theilmann D.A."/>
        </authorList>
    </citation>
    <scope>FUNCTION</scope>
    <scope>INTERACTION WITH HOST BETA-TUBULIN</scope>
</reference>
<reference key="4">
    <citation type="journal article" date="2012" name="Viruses">
        <title>Conserved structural motifs at the C-terminus of baculovirus protein IE0 are important for its functions in transactivation and supporting hr5-mediated DNA replication.</title>
        <authorList>
            <person name="Luria N."/>
            <person name="Lu L."/>
            <person name="Chejanovsky N."/>
        </authorList>
    </citation>
    <scope>FUNCTION</scope>
    <scope>SUBCELLULAR LOCATION</scope>
</reference>
<reference key="5">
    <citation type="journal article" date="2014" name="Virology">
        <title>Defining the roles of the baculovirus regulatory proteins IE0 and IE1 in genome replication and early gene transactivation.</title>
        <authorList>
            <person name="Sokal N."/>
            <person name="Nie Y."/>
            <person name="Willis L.G."/>
            <person name="Yamagishi J."/>
            <person name="Blissard G.W."/>
            <person name="Rheault M.R."/>
            <person name="Theilmann D.A."/>
        </authorList>
    </citation>
    <scope>FUNCTION</scope>
</reference>
<reference key="6">
    <citation type="journal article" date="2018" name="J. Virol.">
        <title>Autographa californica Nucleopolyhedrovirus AC141 (Exon0), a potential E3 ubiquitin ligase, interacts with viral Ubiquitin and AC66 to facilitate nucleocapsid egress.</title>
        <authorList>
            <person name="Biswas S."/>
            <person name="Willis L.G."/>
            <person name="Fang M."/>
            <person name="Nie Y."/>
            <person name="Theilmann D.A."/>
        </authorList>
    </citation>
    <scope>FUNCTION</scope>
    <scope>INTERACTION WITH AC66 AND UBIL</scope>
</reference>